<accession>P0DOQ9</accession>
<accession>P32983</accession>
<accession>Q76Q32</accession>
<organism>
    <name type="scientific">Variola virus (isolate Human/India/Ind3/1967)</name>
    <name type="common">VARV</name>
    <name type="synonym">Smallpox virus</name>
    <dbReference type="NCBI Taxonomy" id="587200"/>
    <lineage>
        <taxon>Viruses</taxon>
        <taxon>Varidnaviria</taxon>
        <taxon>Bamfordvirae</taxon>
        <taxon>Nucleocytoviricota</taxon>
        <taxon>Pokkesviricetes</taxon>
        <taxon>Chitovirales</taxon>
        <taxon>Poxviridae</taxon>
        <taxon>Chordopoxvirinae</taxon>
        <taxon>Orthopoxvirus</taxon>
        <taxon>Variola virus</taxon>
    </lineage>
</organism>
<evidence type="ECO:0000250" key="1"/>
<evidence type="ECO:0000250" key="2">
    <source>
        <dbReference type="UniProtKB" id="P68692"/>
    </source>
</evidence>
<evidence type="ECO:0000255" key="3">
    <source>
        <dbReference type="PROSITE-ProRule" id="PRU00686"/>
    </source>
</evidence>
<evidence type="ECO:0000305" key="4"/>
<dbReference type="EMBL" id="X67119">
    <property type="protein sequence ID" value="CAA47554.1"/>
    <property type="molecule type" value="Genomic_DNA"/>
</dbReference>
<dbReference type="EMBL" id="X69198">
    <property type="protein sequence ID" value="CAA48995.1"/>
    <property type="molecule type" value="Genomic_DNA"/>
</dbReference>
<dbReference type="PIR" id="S33069">
    <property type="entry name" value="G36842"/>
</dbReference>
<dbReference type="SMR" id="P0DOQ9"/>
<dbReference type="KEGG" id="vg:1486484"/>
<dbReference type="Proteomes" id="UP000002060">
    <property type="component" value="Segment"/>
</dbReference>
<dbReference type="GO" id="GO:0044423">
    <property type="term" value="C:virion component"/>
    <property type="evidence" value="ECO:0007669"/>
    <property type="project" value="UniProtKB-KW"/>
</dbReference>
<dbReference type="GO" id="GO:0015038">
    <property type="term" value="F:glutathione disulfide oxidoreductase activity"/>
    <property type="evidence" value="ECO:0007669"/>
    <property type="project" value="TreeGrafter"/>
</dbReference>
<dbReference type="Gene3D" id="3.40.30.10">
    <property type="entry name" value="Glutaredoxin"/>
    <property type="match status" value="1"/>
</dbReference>
<dbReference type="InterPro" id="IPR011767">
    <property type="entry name" value="GLR_AS"/>
</dbReference>
<dbReference type="InterPro" id="IPR047185">
    <property type="entry name" value="GLRX1"/>
</dbReference>
<dbReference type="InterPro" id="IPR002109">
    <property type="entry name" value="Glutaredoxin"/>
</dbReference>
<dbReference type="InterPro" id="IPR011899">
    <property type="entry name" value="Glutaredoxin_euk/vir"/>
</dbReference>
<dbReference type="InterPro" id="IPR014025">
    <property type="entry name" value="Glutaredoxin_subgr"/>
</dbReference>
<dbReference type="InterPro" id="IPR036249">
    <property type="entry name" value="Thioredoxin-like_sf"/>
</dbReference>
<dbReference type="NCBIfam" id="TIGR02180">
    <property type="entry name" value="GRX_euk"/>
    <property type="match status" value="1"/>
</dbReference>
<dbReference type="PANTHER" id="PTHR46185">
    <property type="entry name" value="GLUTAREDOXIN-1"/>
    <property type="match status" value="1"/>
</dbReference>
<dbReference type="PANTHER" id="PTHR46185:SF1">
    <property type="entry name" value="GLUTAREDOXIN-1"/>
    <property type="match status" value="1"/>
</dbReference>
<dbReference type="Pfam" id="PF00462">
    <property type="entry name" value="Glutaredoxin"/>
    <property type="match status" value="1"/>
</dbReference>
<dbReference type="PRINTS" id="PR00160">
    <property type="entry name" value="GLUTAREDOXIN"/>
</dbReference>
<dbReference type="SUPFAM" id="SSF52833">
    <property type="entry name" value="Thioredoxin-like"/>
    <property type="match status" value="1"/>
</dbReference>
<dbReference type="PROSITE" id="PS00195">
    <property type="entry name" value="GLUTAREDOXIN_1"/>
    <property type="match status" value="1"/>
</dbReference>
<dbReference type="PROSITE" id="PS51354">
    <property type="entry name" value="GLUTAREDOXIN_2"/>
    <property type="match status" value="1"/>
</dbReference>
<reference key="1">
    <citation type="journal article" date="1993" name="Virus Res.">
        <title>Analysis of the nucleotide sequence of a 43 kbp segment of the genome of variola virus India-1967 strain.</title>
        <authorList>
            <person name="Shchelkunov S.N."/>
            <person name="Blinov V.M."/>
            <person name="Resenchuk S.M."/>
            <person name="Totmenin A.V."/>
            <person name="Sandakhchiev L.S."/>
        </authorList>
    </citation>
    <scope>NUCLEOTIDE SEQUENCE [GENOMIC DNA]</scope>
</reference>
<reference key="2">
    <citation type="journal article" date="1993" name="Virus Res.">
        <title>Nucleotide sequence analysis of variola virus HindIII M, L, I genome fragments.</title>
        <authorList>
            <person name="Shchelkunov S.N."/>
            <person name="Blinov V.M."/>
            <person name="Totmenin A.V."/>
            <person name="Marennikova S.S."/>
            <person name="Kolykhalov A.A."/>
            <person name="Frolov I.V."/>
            <person name="Chizhikov V.E."/>
            <person name="Gytorov V.V."/>
            <person name="Gashikov P.V."/>
            <person name="Belanov E.F."/>
            <person name="Belavin P.A."/>
            <person name="Resenchuk S.M."/>
            <person name="Andzhaparidze O.G."/>
            <person name="Sandakhchiev L.S."/>
        </authorList>
    </citation>
    <scope>NUCLEOTIDE SEQUENCE [GENOMIC DNA]</scope>
</reference>
<reference key="3">
    <citation type="journal article" date="1993" name="FEBS Lett.">
        <title>Genes of variola and vaccinia viruses necessary to overcome the host protective mechanisms.</title>
        <authorList>
            <person name="Shchelkunov S.N."/>
            <person name="Blinov V.M."/>
            <person name="Sandakhchiev L.S."/>
        </authorList>
    </citation>
    <scope>NUCLEOTIDE SEQUENCE [LARGE SCALE GENOMIC DNA]</scope>
</reference>
<organismHost>
    <name type="scientific">Homo sapiens</name>
    <name type="common">Human</name>
    <dbReference type="NCBI Taxonomy" id="9606"/>
</organismHost>
<gene>
    <name type="primary">OPG075</name>
    <name type="ORF">O2L</name>
</gene>
<comment type="function">
    <text evidence="1">Displays thioltransferase and dehydroascorbate reductase activities.</text>
</comment>
<comment type="subcellular location">
    <subcellularLocation>
        <location>Virion</location>
    </subcellularLocation>
    <text evidence="1">Localizes to the virion core.</text>
</comment>
<comment type="induction">
    <text evidence="2">Expressed in the intermediate phase of the viral replicative cycle.</text>
</comment>
<comment type="similarity">
    <text evidence="4">Belongs to the glutaredoxin family.</text>
</comment>
<name>GLRX1_VAR67</name>
<sequence length="108" mass="12349">MAEEFVQQRLTNNKVTIFVKFTCPFCRNALDILNKFSFKRGAYEIVDIKEFKPENKLHDYFEQITGGRTVPRIFFGKTSIGGYSDLLEIDNMDALGDILSSIGVLRTC</sequence>
<protein>
    <recommendedName>
        <fullName>Glutaredoxin-1</fullName>
    </recommendedName>
</protein>
<feature type="chain" id="PRO_0000141619" description="Glutaredoxin-1">
    <location>
        <begin position="1"/>
        <end position="108"/>
    </location>
</feature>
<feature type="domain" description="Glutaredoxin" evidence="3">
    <location>
        <begin position="3"/>
        <end position="106"/>
    </location>
</feature>
<feature type="disulfide bond" description="Redox-active" evidence="2">
    <location>
        <begin position="23"/>
        <end position="26"/>
    </location>
</feature>
<keyword id="KW-1015">Disulfide bond</keyword>
<keyword id="KW-0249">Electron transport</keyword>
<keyword id="KW-0676">Redox-active center</keyword>
<keyword id="KW-1185">Reference proteome</keyword>
<keyword id="KW-0813">Transport</keyword>
<keyword id="KW-0946">Virion</keyword>
<proteinExistence type="inferred from homology"/>